<organism>
    <name type="scientific">Corynebacterium glutamicum (strain ATCC 13032 / DSM 20300 / JCM 1318 / BCRC 11384 / CCUG 27702 / LMG 3730 / NBRC 12168 / NCIMB 10025 / NRRL B-2784 / 534)</name>
    <dbReference type="NCBI Taxonomy" id="196627"/>
    <lineage>
        <taxon>Bacteria</taxon>
        <taxon>Bacillati</taxon>
        <taxon>Actinomycetota</taxon>
        <taxon>Actinomycetes</taxon>
        <taxon>Mycobacteriales</taxon>
        <taxon>Corynebacteriaceae</taxon>
        <taxon>Corynebacterium</taxon>
    </lineage>
</organism>
<feature type="chain" id="PRO_0000207270" description="Zinc transporter ZupT">
    <location>
        <begin position="1"/>
        <end position="263"/>
    </location>
</feature>
<feature type="transmembrane region" description="Helical" evidence="1">
    <location>
        <begin position="1"/>
        <end position="21"/>
    </location>
</feature>
<feature type="transmembrane region" description="Helical" evidence="1">
    <location>
        <begin position="37"/>
        <end position="57"/>
    </location>
</feature>
<feature type="transmembrane region" description="Helical" evidence="1">
    <location>
        <begin position="68"/>
        <end position="88"/>
    </location>
</feature>
<feature type="transmembrane region" description="Helical" evidence="1">
    <location>
        <begin position="116"/>
        <end position="136"/>
    </location>
</feature>
<feature type="transmembrane region" description="Helical" evidence="1">
    <location>
        <begin position="138"/>
        <end position="158"/>
    </location>
</feature>
<feature type="transmembrane region" description="Helical" evidence="1">
    <location>
        <begin position="184"/>
        <end position="204"/>
    </location>
</feature>
<feature type="transmembrane region" description="Helical" evidence="1">
    <location>
        <begin position="206"/>
        <end position="226"/>
    </location>
</feature>
<feature type="transmembrane region" description="Helical" evidence="1">
    <location>
        <begin position="243"/>
        <end position="263"/>
    </location>
</feature>
<feature type="binding site" description="M2 metal binding site" evidence="1">
    <location>
        <position position="131"/>
    </location>
    <ligand>
        <name>Fe(2+)</name>
        <dbReference type="ChEBI" id="CHEBI:29033"/>
    </ligand>
</feature>
<feature type="binding site" description="M2 metal binding site" evidence="1">
    <location>
        <position position="134"/>
    </location>
    <ligand>
        <name>Fe(2+)</name>
        <dbReference type="ChEBI" id="CHEBI:29033"/>
    </ligand>
</feature>
<feature type="binding site" description="M1 metal binding site" evidence="1">
    <location>
        <position position="134"/>
    </location>
    <ligand>
        <name>Zn(2+)</name>
        <dbReference type="ChEBI" id="CHEBI:29105"/>
    </ligand>
</feature>
<feature type="binding site" description="M1 metal binding site" evidence="1">
    <location>
        <position position="159"/>
    </location>
    <ligand>
        <name>Zn(2+)</name>
        <dbReference type="ChEBI" id="CHEBI:29105"/>
    </ligand>
</feature>
<feature type="binding site" description="M2 metal binding site" evidence="1">
    <location>
        <position position="160"/>
    </location>
    <ligand>
        <name>Fe(2+)</name>
        <dbReference type="ChEBI" id="CHEBI:29033"/>
    </ligand>
</feature>
<feature type="binding site" description="M2 metal binding site" evidence="1">
    <location>
        <position position="163"/>
    </location>
    <ligand>
        <name>Fe(2+)</name>
        <dbReference type="ChEBI" id="CHEBI:29033"/>
    </ligand>
</feature>
<feature type="binding site" description="M1 metal binding site" evidence="1">
    <location>
        <position position="163"/>
    </location>
    <ligand>
        <name>Zn(2+)</name>
        <dbReference type="ChEBI" id="CHEBI:29105"/>
    </ligand>
</feature>
<feature type="binding site" description="M2 metal binding site" evidence="1">
    <location>
        <position position="192"/>
    </location>
    <ligand>
        <name>Fe(2+)</name>
        <dbReference type="ChEBI" id="CHEBI:29033"/>
    </ligand>
</feature>
<protein>
    <recommendedName>
        <fullName evidence="1">Zinc transporter ZupT</fullName>
    </recommendedName>
</protein>
<keyword id="KW-1003">Cell membrane</keyword>
<keyword id="KW-0406">Ion transport</keyword>
<keyword id="KW-0408">Iron</keyword>
<keyword id="KW-0472">Membrane</keyword>
<keyword id="KW-0479">Metal-binding</keyword>
<keyword id="KW-1185">Reference proteome</keyword>
<keyword id="KW-0812">Transmembrane</keyword>
<keyword id="KW-1133">Transmembrane helix</keyword>
<keyword id="KW-0813">Transport</keyword>
<keyword id="KW-0862">Zinc</keyword>
<keyword id="KW-0864">Zinc transport</keyword>
<name>ZUPT_CORGL</name>
<accession>Q8NQK0</accession>
<gene>
    <name evidence="1" type="primary">zupT</name>
    <name type="ordered locus">Cgl1434</name>
    <name type="ordered locus">cg1623</name>
</gene>
<evidence type="ECO:0000255" key="1">
    <source>
        <dbReference type="HAMAP-Rule" id="MF_00548"/>
    </source>
</evidence>
<evidence type="ECO:0000305" key="2"/>
<reference key="1">
    <citation type="journal article" date="2003" name="Appl. Microbiol. Biotechnol.">
        <title>The Corynebacterium glutamicum genome: features and impacts on biotechnological processes.</title>
        <authorList>
            <person name="Ikeda M."/>
            <person name="Nakagawa S."/>
        </authorList>
    </citation>
    <scope>NUCLEOTIDE SEQUENCE [LARGE SCALE GENOMIC DNA]</scope>
    <source>
        <strain>ATCC 13032 / DSM 20300 / JCM 1318 / BCRC 11384 / CCUG 27702 / LMG 3730 / NBRC 12168 / NCIMB 10025 / NRRL B-2784 / 534</strain>
    </source>
</reference>
<reference key="2">
    <citation type="journal article" date="2003" name="J. Biotechnol.">
        <title>The complete Corynebacterium glutamicum ATCC 13032 genome sequence and its impact on the production of L-aspartate-derived amino acids and vitamins.</title>
        <authorList>
            <person name="Kalinowski J."/>
            <person name="Bathe B."/>
            <person name="Bartels D."/>
            <person name="Bischoff N."/>
            <person name="Bott M."/>
            <person name="Burkovski A."/>
            <person name="Dusch N."/>
            <person name="Eggeling L."/>
            <person name="Eikmanns B.J."/>
            <person name="Gaigalat L."/>
            <person name="Goesmann A."/>
            <person name="Hartmann M."/>
            <person name="Huthmacher K."/>
            <person name="Kraemer R."/>
            <person name="Linke B."/>
            <person name="McHardy A.C."/>
            <person name="Meyer F."/>
            <person name="Moeckel B."/>
            <person name="Pfefferle W."/>
            <person name="Puehler A."/>
            <person name="Rey D.A."/>
            <person name="Rueckert C."/>
            <person name="Rupp O."/>
            <person name="Sahm H."/>
            <person name="Wendisch V.F."/>
            <person name="Wiegraebe I."/>
            <person name="Tauch A."/>
        </authorList>
    </citation>
    <scope>NUCLEOTIDE SEQUENCE [LARGE SCALE GENOMIC DNA]</scope>
    <source>
        <strain>ATCC 13032 / DSM 20300 / JCM 1318 / BCRC 11384 / CCUG 27702 / LMG 3730 / NBRC 12168 / NCIMB 10025 / NRRL B-2784 / 534</strain>
    </source>
</reference>
<dbReference type="EMBL" id="BA000036">
    <property type="protein sequence ID" value="BAB98827.1"/>
    <property type="molecule type" value="Genomic_DNA"/>
</dbReference>
<dbReference type="EMBL" id="BX927152">
    <property type="protein sequence ID" value="CAF21444.1"/>
    <property type="status" value="ALT_INIT"/>
    <property type="molecule type" value="Genomic_DNA"/>
</dbReference>
<dbReference type="RefSeq" id="NP_600652.1">
    <property type="nucleotide sequence ID" value="NC_003450.3"/>
</dbReference>
<dbReference type="SMR" id="Q8NQK0"/>
<dbReference type="STRING" id="196627.cg1623"/>
<dbReference type="KEGG" id="cgb:cg1623"/>
<dbReference type="KEGG" id="cgl:Cgl1434"/>
<dbReference type="PATRIC" id="fig|196627.13.peg.1402"/>
<dbReference type="eggNOG" id="COG0428">
    <property type="taxonomic scope" value="Bacteria"/>
</dbReference>
<dbReference type="HOGENOM" id="CLU_015114_1_3_11"/>
<dbReference type="OrthoDB" id="9787346at2"/>
<dbReference type="BioCyc" id="CORYNE:G18NG-11016-MONOMER"/>
<dbReference type="Proteomes" id="UP000000582">
    <property type="component" value="Chromosome"/>
</dbReference>
<dbReference type="Proteomes" id="UP000001009">
    <property type="component" value="Chromosome"/>
</dbReference>
<dbReference type="GO" id="GO:0005886">
    <property type="term" value="C:plasma membrane"/>
    <property type="evidence" value="ECO:0007669"/>
    <property type="project" value="UniProtKB-SubCell"/>
</dbReference>
<dbReference type="GO" id="GO:0046872">
    <property type="term" value="F:metal ion binding"/>
    <property type="evidence" value="ECO:0007669"/>
    <property type="project" value="UniProtKB-KW"/>
</dbReference>
<dbReference type="GO" id="GO:0005385">
    <property type="term" value="F:zinc ion transmembrane transporter activity"/>
    <property type="evidence" value="ECO:0007669"/>
    <property type="project" value="UniProtKB-UniRule"/>
</dbReference>
<dbReference type="HAMAP" id="MF_00548">
    <property type="entry name" value="ZupT"/>
    <property type="match status" value="1"/>
</dbReference>
<dbReference type="InterPro" id="IPR003689">
    <property type="entry name" value="ZIP"/>
</dbReference>
<dbReference type="InterPro" id="IPR023498">
    <property type="entry name" value="Zn_transptr_ZupT"/>
</dbReference>
<dbReference type="NCBIfam" id="NF003243">
    <property type="entry name" value="PRK04201.1"/>
    <property type="match status" value="1"/>
</dbReference>
<dbReference type="PANTHER" id="PTHR11040:SF205">
    <property type="entry name" value="ZINC TRANSPORTER ZUPT"/>
    <property type="match status" value="1"/>
</dbReference>
<dbReference type="PANTHER" id="PTHR11040">
    <property type="entry name" value="ZINC/IRON TRANSPORTER"/>
    <property type="match status" value="1"/>
</dbReference>
<dbReference type="Pfam" id="PF02535">
    <property type="entry name" value="Zip"/>
    <property type="match status" value="1"/>
</dbReference>
<comment type="function">
    <text evidence="1">Mediates zinc uptake. May also transport other divalent cations.</text>
</comment>
<comment type="catalytic activity">
    <reaction evidence="1">
        <text>Zn(2+)(in) = Zn(2+)(out)</text>
        <dbReference type="Rhea" id="RHEA:29351"/>
        <dbReference type="ChEBI" id="CHEBI:29105"/>
    </reaction>
</comment>
<comment type="subcellular location">
    <subcellularLocation>
        <location evidence="1">Cell membrane</location>
        <topology evidence="1">Multi-pass membrane protein</topology>
    </subcellularLocation>
</comment>
<comment type="similarity">
    <text evidence="1">Belongs to the ZIP transporter (TC 2.A.5) family. ZupT subfamily.</text>
</comment>
<comment type="sequence caution" evidence="2">
    <conflict type="erroneous initiation">
        <sequence resource="EMBL-CDS" id="CAF21444"/>
    </conflict>
</comment>
<proteinExistence type="inferred from homology"/>
<sequence>MLFAFGLTLFAGLATGIGGLIAVARKTVTEGFLAGSLGFSVGVMLYVSFVEILPGAFDELTSVWGEKGGSWAAVIGFFGGIALIAIIDRLVPTAINPHEPSTVGGAVEGFERRNRMMKMGVLTALAIAIHNFPEGFATFLAGLSDPMIAIPVAVAIAIHNIPEGIAVAVPLREATGSRRKALGWATLSGLAEPAGALIGFLLLMPFIGPEALGLCFAAVAGVMVFISVDELLPTAISSGKHHTAIYGLIAGMAVMAISLLLFI</sequence>